<keyword id="KW-0963">Cytoplasm</keyword>
<keyword id="KW-0255">Endonuclease</keyword>
<keyword id="KW-0378">Hydrolase</keyword>
<keyword id="KW-0479">Metal-binding</keyword>
<keyword id="KW-0540">Nuclease</keyword>
<keyword id="KW-1185">Reference proteome</keyword>
<keyword id="KW-0690">Ribosome biogenesis</keyword>
<keyword id="KW-0698">rRNA processing</keyword>
<keyword id="KW-0862">Zinc</keyword>
<proteinExistence type="inferred from homology"/>
<accession>Q2FY02</accession>
<organism>
    <name type="scientific">Staphylococcus aureus (strain NCTC 8325 / PS 47)</name>
    <dbReference type="NCBI Taxonomy" id="93061"/>
    <lineage>
        <taxon>Bacteria</taxon>
        <taxon>Bacillati</taxon>
        <taxon>Bacillota</taxon>
        <taxon>Bacilli</taxon>
        <taxon>Bacillales</taxon>
        <taxon>Staphylococcaceae</taxon>
        <taxon>Staphylococcus</taxon>
    </lineage>
</organism>
<protein>
    <recommendedName>
        <fullName evidence="1">Endoribonuclease YbeY</fullName>
        <ecNumber evidence="1">3.1.-.-</ecNumber>
    </recommendedName>
</protein>
<feature type="chain" id="PRO_0000284320" description="Endoribonuclease YbeY">
    <location>
        <begin position="1"/>
        <end position="155"/>
    </location>
</feature>
<feature type="binding site" evidence="1">
    <location>
        <position position="120"/>
    </location>
    <ligand>
        <name>Zn(2+)</name>
        <dbReference type="ChEBI" id="CHEBI:29105"/>
        <note>catalytic</note>
    </ligand>
</feature>
<feature type="binding site" evidence="1">
    <location>
        <position position="124"/>
    </location>
    <ligand>
        <name>Zn(2+)</name>
        <dbReference type="ChEBI" id="CHEBI:29105"/>
        <note>catalytic</note>
    </ligand>
</feature>
<feature type="binding site" evidence="1">
    <location>
        <position position="130"/>
    </location>
    <ligand>
        <name>Zn(2+)</name>
        <dbReference type="ChEBI" id="CHEBI:29105"/>
        <note>catalytic</note>
    </ligand>
</feature>
<evidence type="ECO:0000255" key="1">
    <source>
        <dbReference type="HAMAP-Rule" id="MF_00009"/>
    </source>
</evidence>
<reference key="1">
    <citation type="book" date="2006" name="Gram positive pathogens, 2nd edition">
        <title>The Staphylococcus aureus NCTC 8325 genome.</title>
        <editorList>
            <person name="Fischetti V."/>
            <person name="Novick R."/>
            <person name="Ferretti J."/>
            <person name="Portnoy D."/>
            <person name="Rood J."/>
        </editorList>
        <authorList>
            <person name="Gillaspy A.F."/>
            <person name="Worrell V."/>
            <person name="Orvis J."/>
            <person name="Roe B.A."/>
            <person name="Dyer D.W."/>
            <person name="Iandolo J.J."/>
        </authorList>
    </citation>
    <scope>NUCLEOTIDE SEQUENCE [LARGE SCALE GENOMIC DNA]</scope>
    <source>
        <strain>NCTC 8325 / PS 47</strain>
    </source>
</reference>
<gene>
    <name evidence="1" type="primary">ybeY</name>
    <name type="ordered locus">SAOUHSC_01672</name>
</gene>
<comment type="function">
    <text evidence="1">Single strand-specific metallo-endoribonuclease involved in late-stage 70S ribosome quality control and in maturation of the 3' terminus of the 16S rRNA.</text>
</comment>
<comment type="cofactor">
    <cofactor evidence="1">
        <name>Zn(2+)</name>
        <dbReference type="ChEBI" id="CHEBI:29105"/>
    </cofactor>
    <text evidence="1">Binds 1 zinc ion.</text>
</comment>
<comment type="subcellular location">
    <subcellularLocation>
        <location evidence="1">Cytoplasm</location>
    </subcellularLocation>
</comment>
<comment type="similarity">
    <text evidence="1">Belongs to the endoribonuclease YbeY family.</text>
</comment>
<sequence length="155" mass="17952">MFTIDFSDHTGLVKDAWYKQIEDLLEFAKKEEHIEDDAELSVTFVDKQEIQEINRTYRDKDKVTDVISFALEEDEPEIDFSGLDIPRVLGDIIICTDVAQEQANNYGHSFERELGFLALHGFLHLLGYDHMTEADEKEMFGRQDTILNAYGLTRD</sequence>
<dbReference type="EC" id="3.1.-.-" evidence="1"/>
<dbReference type="EMBL" id="CP000253">
    <property type="protein sequence ID" value="ABD30747.1"/>
    <property type="molecule type" value="Genomic_DNA"/>
</dbReference>
<dbReference type="RefSeq" id="WP_000494134.1">
    <property type="nucleotide sequence ID" value="NZ_LS483365.1"/>
</dbReference>
<dbReference type="RefSeq" id="YP_500183.1">
    <property type="nucleotide sequence ID" value="NC_007795.1"/>
</dbReference>
<dbReference type="SMR" id="Q2FY02"/>
<dbReference type="STRING" id="93061.SAOUHSC_01672"/>
<dbReference type="PaxDb" id="1280-SAXN108_1592"/>
<dbReference type="GeneID" id="3920084"/>
<dbReference type="KEGG" id="sao:SAOUHSC_01672"/>
<dbReference type="PATRIC" id="fig|93061.5.peg.1521"/>
<dbReference type="eggNOG" id="COG0319">
    <property type="taxonomic scope" value="Bacteria"/>
</dbReference>
<dbReference type="HOGENOM" id="CLU_106710_3_0_9"/>
<dbReference type="OrthoDB" id="9807740at2"/>
<dbReference type="PRO" id="PR:Q2FY02"/>
<dbReference type="Proteomes" id="UP000008816">
    <property type="component" value="Chromosome"/>
</dbReference>
<dbReference type="GO" id="GO:0005737">
    <property type="term" value="C:cytoplasm"/>
    <property type="evidence" value="ECO:0007669"/>
    <property type="project" value="UniProtKB-SubCell"/>
</dbReference>
<dbReference type="GO" id="GO:0004222">
    <property type="term" value="F:metalloendopeptidase activity"/>
    <property type="evidence" value="ECO:0007669"/>
    <property type="project" value="InterPro"/>
</dbReference>
<dbReference type="GO" id="GO:0004521">
    <property type="term" value="F:RNA endonuclease activity"/>
    <property type="evidence" value="ECO:0007669"/>
    <property type="project" value="UniProtKB-UniRule"/>
</dbReference>
<dbReference type="GO" id="GO:0008270">
    <property type="term" value="F:zinc ion binding"/>
    <property type="evidence" value="ECO:0007669"/>
    <property type="project" value="UniProtKB-UniRule"/>
</dbReference>
<dbReference type="GO" id="GO:0006364">
    <property type="term" value="P:rRNA processing"/>
    <property type="evidence" value="ECO:0007669"/>
    <property type="project" value="UniProtKB-UniRule"/>
</dbReference>
<dbReference type="Gene3D" id="3.40.390.30">
    <property type="entry name" value="Metalloproteases ('zincins'), catalytic domain"/>
    <property type="match status" value="1"/>
</dbReference>
<dbReference type="HAMAP" id="MF_00009">
    <property type="entry name" value="Endoribonucl_YbeY"/>
    <property type="match status" value="1"/>
</dbReference>
<dbReference type="InterPro" id="IPR023091">
    <property type="entry name" value="MetalPrtase_cat_dom_sf_prd"/>
</dbReference>
<dbReference type="InterPro" id="IPR002036">
    <property type="entry name" value="YbeY"/>
</dbReference>
<dbReference type="InterPro" id="IPR020549">
    <property type="entry name" value="YbeY_CS"/>
</dbReference>
<dbReference type="NCBIfam" id="TIGR00043">
    <property type="entry name" value="rRNA maturation RNase YbeY"/>
    <property type="match status" value="1"/>
</dbReference>
<dbReference type="PANTHER" id="PTHR46986">
    <property type="entry name" value="ENDORIBONUCLEASE YBEY, CHLOROPLASTIC"/>
    <property type="match status" value="1"/>
</dbReference>
<dbReference type="PANTHER" id="PTHR46986:SF1">
    <property type="entry name" value="ENDORIBONUCLEASE YBEY, CHLOROPLASTIC"/>
    <property type="match status" value="1"/>
</dbReference>
<dbReference type="Pfam" id="PF02130">
    <property type="entry name" value="YbeY"/>
    <property type="match status" value="1"/>
</dbReference>
<dbReference type="SUPFAM" id="SSF55486">
    <property type="entry name" value="Metalloproteases ('zincins'), catalytic domain"/>
    <property type="match status" value="1"/>
</dbReference>
<dbReference type="PROSITE" id="PS01306">
    <property type="entry name" value="UPF0054"/>
    <property type="match status" value="1"/>
</dbReference>
<name>YBEY_STAA8</name>